<keyword id="KW-1185">Reference proteome</keyword>
<keyword id="KW-0687">Ribonucleoprotein</keyword>
<keyword id="KW-0689">Ribosomal protein</keyword>
<keyword id="KW-0694">RNA-binding</keyword>
<keyword id="KW-0699">rRNA-binding</keyword>
<accession>B1WXF7</accession>
<comment type="function">
    <text evidence="1">Binds directly to 23S ribosomal RNA and is necessary for the in vitro assembly process of the 50S ribosomal subunit. It is not involved in the protein synthesizing functions of that subunit.</text>
</comment>
<comment type="similarity">
    <text evidence="1">Belongs to the bacterial ribosomal protein bL20 family.</text>
</comment>
<name>RL20_CROS5</name>
<proteinExistence type="inferred from homology"/>
<evidence type="ECO:0000255" key="1">
    <source>
        <dbReference type="HAMAP-Rule" id="MF_00382"/>
    </source>
</evidence>
<evidence type="ECO:0000305" key="2"/>
<dbReference type="EMBL" id="CP000806">
    <property type="protein sequence ID" value="ACB52498.1"/>
    <property type="molecule type" value="Genomic_DNA"/>
</dbReference>
<dbReference type="RefSeq" id="WP_009547471.1">
    <property type="nucleotide sequence ID" value="NC_010546.1"/>
</dbReference>
<dbReference type="SMR" id="B1WXF7"/>
<dbReference type="STRING" id="43989.cce_3150"/>
<dbReference type="KEGG" id="cyt:cce_3150"/>
<dbReference type="eggNOG" id="COG0292">
    <property type="taxonomic scope" value="Bacteria"/>
</dbReference>
<dbReference type="HOGENOM" id="CLU_123265_0_1_3"/>
<dbReference type="OrthoDB" id="9808966at2"/>
<dbReference type="Proteomes" id="UP000001203">
    <property type="component" value="Chromosome circular"/>
</dbReference>
<dbReference type="GO" id="GO:1990904">
    <property type="term" value="C:ribonucleoprotein complex"/>
    <property type="evidence" value="ECO:0007669"/>
    <property type="project" value="UniProtKB-KW"/>
</dbReference>
<dbReference type="GO" id="GO:0005840">
    <property type="term" value="C:ribosome"/>
    <property type="evidence" value="ECO:0007669"/>
    <property type="project" value="UniProtKB-KW"/>
</dbReference>
<dbReference type="GO" id="GO:0019843">
    <property type="term" value="F:rRNA binding"/>
    <property type="evidence" value="ECO:0007669"/>
    <property type="project" value="UniProtKB-UniRule"/>
</dbReference>
<dbReference type="GO" id="GO:0003735">
    <property type="term" value="F:structural constituent of ribosome"/>
    <property type="evidence" value="ECO:0007669"/>
    <property type="project" value="InterPro"/>
</dbReference>
<dbReference type="GO" id="GO:0000027">
    <property type="term" value="P:ribosomal large subunit assembly"/>
    <property type="evidence" value="ECO:0007669"/>
    <property type="project" value="UniProtKB-UniRule"/>
</dbReference>
<dbReference type="GO" id="GO:0006412">
    <property type="term" value="P:translation"/>
    <property type="evidence" value="ECO:0007669"/>
    <property type="project" value="InterPro"/>
</dbReference>
<dbReference type="CDD" id="cd07026">
    <property type="entry name" value="Ribosomal_L20"/>
    <property type="match status" value="1"/>
</dbReference>
<dbReference type="FunFam" id="1.10.1900.20:FF:000001">
    <property type="entry name" value="50S ribosomal protein L20"/>
    <property type="match status" value="1"/>
</dbReference>
<dbReference type="Gene3D" id="6.10.160.10">
    <property type="match status" value="1"/>
</dbReference>
<dbReference type="Gene3D" id="1.10.1900.20">
    <property type="entry name" value="Ribosomal protein L20"/>
    <property type="match status" value="1"/>
</dbReference>
<dbReference type="HAMAP" id="MF_00382">
    <property type="entry name" value="Ribosomal_bL20"/>
    <property type="match status" value="1"/>
</dbReference>
<dbReference type="InterPro" id="IPR005813">
    <property type="entry name" value="Ribosomal_bL20"/>
</dbReference>
<dbReference type="InterPro" id="IPR049946">
    <property type="entry name" value="RIBOSOMAL_L20_CS"/>
</dbReference>
<dbReference type="InterPro" id="IPR035566">
    <property type="entry name" value="Ribosomal_protein_bL20_C"/>
</dbReference>
<dbReference type="NCBIfam" id="TIGR01032">
    <property type="entry name" value="rplT_bact"/>
    <property type="match status" value="1"/>
</dbReference>
<dbReference type="PANTHER" id="PTHR10986">
    <property type="entry name" value="39S RIBOSOMAL PROTEIN L20"/>
    <property type="match status" value="1"/>
</dbReference>
<dbReference type="Pfam" id="PF00453">
    <property type="entry name" value="Ribosomal_L20"/>
    <property type="match status" value="1"/>
</dbReference>
<dbReference type="PRINTS" id="PR00062">
    <property type="entry name" value="RIBOSOMALL20"/>
</dbReference>
<dbReference type="SUPFAM" id="SSF74731">
    <property type="entry name" value="Ribosomal protein L20"/>
    <property type="match status" value="1"/>
</dbReference>
<dbReference type="PROSITE" id="PS00937">
    <property type="entry name" value="RIBOSOMAL_L20"/>
    <property type="match status" value="1"/>
</dbReference>
<feature type="chain" id="PRO_1000193953" description="Large ribosomal subunit protein bL20">
    <location>
        <begin position="1"/>
        <end position="117"/>
    </location>
</feature>
<reference key="1">
    <citation type="journal article" date="2008" name="Proc. Natl. Acad. Sci. U.S.A.">
        <title>The genome of Cyanothece 51142, a unicellular diazotrophic cyanobacterium important in the marine nitrogen cycle.</title>
        <authorList>
            <person name="Welsh E.A."/>
            <person name="Liberton M."/>
            <person name="Stoeckel J."/>
            <person name="Loh T."/>
            <person name="Elvitigala T."/>
            <person name="Wang C."/>
            <person name="Wollam A."/>
            <person name="Fulton R.S."/>
            <person name="Clifton S.W."/>
            <person name="Jacobs J.M."/>
            <person name="Aurora R."/>
            <person name="Ghosh B.K."/>
            <person name="Sherman L.A."/>
            <person name="Smith R.D."/>
            <person name="Wilson R.K."/>
            <person name="Pakrasi H.B."/>
        </authorList>
    </citation>
    <scope>NUCLEOTIDE SEQUENCE [LARGE SCALE GENOMIC DNA]</scope>
    <source>
        <strain>ATCC 51142 / BH68</strain>
    </source>
</reference>
<sequence length="117" mass="13591">MTRVKRGNVARKRRKKILKLAKGFRGSHSRLFRTANQQVMKALRNAYRDRRKRKRDFRRLWITRINAAARANGMSYSQLIGHMKKANIEINRKMLAQLAILDPQAFAKVVETASAAK</sequence>
<gene>
    <name evidence="1" type="primary">rplT</name>
    <name evidence="1" type="synonym">rpl20</name>
    <name type="ordered locus">cce_3150</name>
</gene>
<organism>
    <name type="scientific">Crocosphaera subtropica (strain ATCC 51142 / BH68)</name>
    <name type="common">Cyanothece sp. (strain ATCC 51142)</name>
    <dbReference type="NCBI Taxonomy" id="43989"/>
    <lineage>
        <taxon>Bacteria</taxon>
        <taxon>Bacillati</taxon>
        <taxon>Cyanobacteriota</taxon>
        <taxon>Cyanophyceae</taxon>
        <taxon>Oscillatoriophycideae</taxon>
        <taxon>Chroococcales</taxon>
        <taxon>Aphanothecaceae</taxon>
        <taxon>Crocosphaera</taxon>
        <taxon>Crocosphaera subtropica</taxon>
    </lineage>
</organism>
<protein>
    <recommendedName>
        <fullName evidence="1">Large ribosomal subunit protein bL20</fullName>
    </recommendedName>
    <alternativeName>
        <fullName evidence="2">50S ribosomal protein L20</fullName>
    </alternativeName>
</protein>